<reference key="1">
    <citation type="journal article" date="2006" name="Lancet">
        <title>Complete genome sequence of USA300, an epidemic clone of community-acquired meticillin-resistant Staphylococcus aureus.</title>
        <authorList>
            <person name="Diep B.A."/>
            <person name="Gill S.R."/>
            <person name="Chang R.F."/>
            <person name="Phan T.H."/>
            <person name="Chen J.H."/>
            <person name="Davidson M.G."/>
            <person name="Lin F."/>
            <person name="Lin J."/>
            <person name="Carleton H.A."/>
            <person name="Mongodin E.F."/>
            <person name="Sensabaugh G.F."/>
            <person name="Perdreau-Remington F."/>
        </authorList>
    </citation>
    <scope>NUCLEOTIDE SEQUENCE [LARGE SCALE GENOMIC DNA]</scope>
    <source>
        <strain>USA300</strain>
    </source>
</reference>
<evidence type="ECO:0000255" key="1">
    <source>
        <dbReference type="PROSITE-ProRule" id="PRU00704"/>
    </source>
</evidence>
<evidence type="ECO:0000305" key="2"/>
<dbReference type="EMBL" id="CP000255">
    <property type="protein sequence ID" value="ABD21539.1"/>
    <property type="status" value="ALT_INIT"/>
    <property type="molecule type" value="Genomic_DNA"/>
</dbReference>
<dbReference type="RefSeq" id="WP_000505015.1">
    <property type="nucleotide sequence ID" value="NZ_CP027476.1"/>
</dbReference>
<dbReference type="SMR" id="Q2FH78"/>
<dbReference type="KEGG" id="saa:SAUSA300_1253"/>
<dbReference type="HOGENOM" id="CLU_078802_0_0_9"/>
<dbReference type="Proteomes" id="UP000001939">
    <property type="component" value="Chromosome"/>
</dbReference>
<dbReference type="GO" id="GO:0003723">
    <property type="term" value="F:RNA binding"/>
    <property type="evidence" value="ECO:0007669"/>
    <property type="project" value="InterPro"/>
</dbReference>
<dbReference type="GO" id="GO:0045893">
    <property type="term" value="P:positive regulation of DNA-templated transcription"/>
    <property type="evidence" value="ECO:0007669"/>
    <property type="project" value="InterPro"/>
</dbReference>
<dbReference type="Gene3D" id="1.20.58.1950">
    <property type="match status" value="1"/>
</dbReference>
<dbReference type="Gene3D" id="1.20.890.100">
    <property type="match status" value="1"/>
</dbReference>
<dbReference type="Gene3D" id="2.30.24.10">
    <property type="entry name" value="CAT RNA-binding domain"/>
    <property type="match status" value="1"/>
</dbReference>
<dbReference type="Gene3D" id="1.10.1790.10">
    <property type="entry name" value="PRD domain"/>
    <property type="match status" value="1"/>
</dbReference>
<dbReference type="InterPro" id="IPR050661">
    <property type="entry name" value="BglG_antiterminators"/>
</dbReference>
<dbReference type="InterPro" id="IPR004341">
    <property type="entry name" value="CAT_RNA-bd_dom"/>
</dbReference>
<dbReference type="InterPro" id="IPR036650">
    <property type="entry name" value="CAT_RNA-bd_dom_sf"/>
</dbReference>
<dbReference type="InterPro" id="IPR011608">
    <property type="entry name" value="PRD"/>
</dbReference>
<dbReference type="InterPro" id="IPR036634">
    <property type="entry name" value="PRD_sf"/>
</dbReference>
<dbReference type="InterPro" id="IPR001550">
    <property type="entry name" value="Transcrpt_antitermin_CS"/>
</dbReference>
<dbReference type="NCBIfam" id="NF047357">
    <property type="entry name" value="antiterm_GlcT"/>
    <property type="match status" value="1"/>
</dbReference>
<dbReference type="PANTHER" id="PTHR30185">
    <property type="entry name" value="CRYPTIC BETA-GLUCOSIDE BGL OPERON ANTITERMINATOR"/>
    <property type="match status" value="1"/>
</dbReference>
<dbReference type="PANTHER" id="PTHR30185:SF16">
    <property type="entry name" value="PROTEIN GLCT"/>
    <property type="match status" value="1"/>
</dbReference>
<dbReference type="Pfam" id="PF03123">
    <property type="entry name" value="CAT_RBD"/>
    <property type="match status" value="1"/>
</dbReference>
<dbReference type="Pfam" id="PF00874">
    <property type="entry name" value="PRD"/>
    <property type="match status" value="2"/>
</dbReference>
<dbReference type="SMART" id="SM01061">
    <property type="entry name" value="CAT_RBD"/>
    <property type="match status" value="1"/>
</dbReference>
<dbReference type="SUPFAM" id="SSF63520">
    <property type="entry name" value="PTS-regulatory domain, PRD"/>
    <property type="match status" value="2"/>
</dbReference>
<dbReference type="SUPFAM" id="SSF50151">
    <property type="entry name" value="SacY-like RNA-binding domain"/>
    <property type="match status" value="1"/>
</dbReference>
<dbReference type="PROSITE" id="PS00654">
    <property type="entry name" value="PRD_1"/>
    <property type="match status" value="1"/>
</dbReference>
<dbReference type="PROSITE" id="PS51372">
    <property type="entry name" value="PRD_2"/>
    <property type="match status" value="2"/>
</dbReference>
<name>GLCT_STAA3</name>
<sequence>MGEYIVTKTLNNNVVVCTNNDQEVILIGKGIGFNKKEGMALNDQTITIEKIYKLESEQQKAHYKSLVEIADDNVLQVIIDSLNFISNTAMNVDSKQLVVSLTDHIIFAYKRLKQNQVISNPFVMETMQLYSDAYHIAKQVIDQLNAALDVHFPEDEIGFIALHIASNTEDLSMHEMTLINNVIKKGIDIIESDLVTTVDKESLQYQRFIRHVQFLIRRLRRKEYIHAQDDFVSMIKNHYPICYNTAYKILTMIQKQFDVNISESEIIYLTLHIHHFEERINQS</sequence>
<gene>
    <name type="primary">glcT</name>
    <name type="ordered locus">SAUSA300_1253</name>
</gene>
<proteinExistence type="inferred from homology"/>
<protein>
    <recommendedName>
        <fullName>Protein GlcT</fullName>
    </recommendedName>
</protein>
<accession>Q2FH78</accession>
<feature type="chain" id="PRO_0000352602" description="Protein GlcT">
    <location>
        <begin position="1"/>
        <end position="283"/>
    </location>
</feature>
<feature type="domain" description="PRD 1" evidence="1">
    <location>
        <begin position="69"/>
        <end position="173"/>
    </location>
</feature>
<feature type="domain" description="PRD 2" evidence="1">
    <location>
        <begin position="174"/>
        <end position="283"/>
    </location>
</feature>
<comment type="similarity">
    <text evidence="2">Belongs to the transcriptional antiterminator BglG family. GlcT subfamily.</text>
</comment>
<comment type="sequence caution" evidence="2">
    <conflict type="erroneous initiation">
        <sequence resource="EMBL-CDS" id="ABD21539"/>
    </conflict>
</comment>
<organism>
    <name type="scientific">Staphylococcus aureus (strain USA300)</name>
    <dbReference type="NCBI Taxonomy" id="367830"/>
    <lineage>
        <taxon>Bacteria</taxon>
        <taxon>Bacillati</taxon>
        <taxon>Bacillota</taxon>
        <taxon>Bacilli</taxon>
        <taxon>Bacillales</taxon>
        <taxon>Staphylococcaceae</taxon>
        <taxon>Staphylococcus</taxon>
    </lineage>
</organism>
<keyword id="KW-0677">Repeat</keyword>